<dbReference type="PIR" id="S07672">
    <property type="entry name" value="HALE2R"/>
</dbReference>
<dbReference type="SMR" id="P20019"/>
<dbReference type="GO" id="GO:0072562">
    <property type="term" value="C:blood microparticle"/>
    <property type="evidence" value="ECO:0007669"/>
    <property type="project" value="TreeGrafter"/>
</dbReference>
<dbReference type="GO" id="GO:0031838">
    <property type="term" value="C:haptoglobin-hemoglobin complex"/>
    <property type="evidence" value="ECO:0007669"/>
    <property type="project" value="TreeGrafter"/>
</dbReference>
<dbReference type="GO" id="GO:0005833">
    <property type="term" value="C:hemoglobin complex"/>
    <property type="evidence" value="ECO:0007669"/>
    <property type="project" value="InterPro"/>
</dbReference>
<dbReference type="GO" id="GO:0031720">
    <property type="term" value="F:haptoglobin binding"/>
    <property type="evidence" value="ECO:0007669"/>
    <property type="project" value="TreeGrafter"/>
</dbReference>
<dbReference type="GO" id="GO:0020037">
    <property type="term" value="F:heme binding"/>
    <property type="evidence" value="ECO:0007669"/>
    <property type="project" value="InterPro"/>
</dbReference>
<dbReference type="GO" id="GO:0005506">
    <property type="term" value="F:iron ion binding"/>
    <property type="evidence" value="ECO:0007669"/>
    <property type="project" value="InterPro"/>
</dbReference>
<dbReference type="GO" id="GO:0043177">
    <property type="term" value="F:organic acid binding"/>
    <property type="evidence" value="ECO:0007669"/>
    <property type="project" value="TreeGrafter"/>
</dbReference>
<dbReference type="GO" id="GO:0019825">
    <property type="term" value="F:oxygen binding"/>
    <property type="evidence" value="ECO:0007669"/>
    <property type="project" value="InterPro"/>
</dbReference>
<dbReference type="GO" id="GO:0005344">
    <property type="term" value="F:oxygen carrier activity"/>
    <property type="evidence" value="ECO:0007669"/>
    <property type="project" value="UniProtKB-KW"/>
</dbReference>
<dbReference type="GO" id="GO:0004601">
    <property type="term" value="F:peroxidase activity"/>
    <property type="evidence" value="ECO:0007669"/>
    <property type="project" value="TreeGrafter"/>
</dbReference>
<dbReference type="GO" id="GO:0042744">
    <property type="term" value="P:hydrogen peroxide catabolic process"/>
    <property type="evidence" value="ECO:0007669"/>
    <property type="project" value="TreeGrafter"/>
</dbReference>
<dbReference type="CDD" id="cd08927">
    <property type="entry name" value="Hb-alpha-like"/>
    <property type="match status" value="1"/>
</dbReference>
<dbReference type="FunFam" id="1.10.490.10:FF:000002">
    <property type="entry name" value="Hemoglobin subunit alpha"/>
    <property type="match status" value="1"/>
</dbReference>
<dbReference type="Gene3D" id="1.10.490.10">
    <property type="entry name" value="Globins"/>
    <property type="match status" value="1"/>
</dbReference>
<dbReference type="InterPro" id="IPR000971">
    <property type="entry name" value="Globin"/>
</dbReference>
<dbReference type="InterPro" id="IPR009050">
    <property type="entry name" value="Globin-like_sf"/>
</dbReference>
<dbReference type="InterPro" id="IPR012292">
    <property type="entry name" value="Globin/Proto"/>
</dbReference>
<dbReference type="InterPro" id="IPR002338">
    <property type="entry name" value="Hemoglobin_a-typ"/>
</dbReference>
<dbReference type="InterPro" id="IPR050056">
    <property type="entry name" value="Hemoglobin_oxygen_transport"/>
</dbReference>
<dbReference type="InterPro" id="IPR002339">
    <property type="entry name" value="Hemoglobin_pi"/>
</dbReference>
<dbReference type="PANTHER" id="PTHR11442">
    <property type="entry name" value="HEMOGLOBIN FAMILY MEMBER"/>
    <property type="match status" value="1"/>
</dbReference>
<dbReference type="PANTHER" id="PTHR11442:SF48">
    <property type="entry name" value="HEMOGLOBIN SUBUNIT ALPHA"/>
    <property type="match status" value="1"/>
</dbReference>
<dbReference type="Pfam" id="PF00042">
    <property type="entry name" value="Globin"/>
    <property type="match status" value="1"/>
</dbReference>
<dbReference type="PRINTS" id="PR00612">
    <property type="entry name" value="ALPHAHAEM"/>
</dbReference>
<dbReference type="PRINTS" id="PR00815">
    <property type="entry name" value="PIHAEM"/>
</dbReference>
<dbReference type="SUPFAM" id="SSF46458">
    <property type="entry name" value="Globin-like"/>
    <property type="match status" value="1"/>
</dbReference>
<dbReference type="PROSITE" id="PS01033">
    <property type="entry name" value="GLOBIN"/>
    <property type="match status" value="1"/>
</dbReference>
<proteinExistence type="evidence at protein level"/>
<feature type="chain" id="PRO_0000052666" description="Hemoglobin subunit alpha-2">
    <location>
        <begin position="1"/>
        <end position="141"/>
    </location>
</feature>
<feature type="domain" description="Globin" evidence="1">
    <location>
        <begin position="1"/>
        <end position="141"/>
    </location>
</feature>
<feature type="binding site" evidence="1">
    <location>
        <position position="58"/>
    </location>
    <ligand>
        <name>O2</name>
        <dbReference type="ChEBI" id="CHEBI:15379"/>
    </ligand>
</feature>
<feature type="binding site" description="proximal binding residue" evidence="1">
    <location>
        <position position="87"/>
    </location>
    <ligand>
        <name>heme b</name>
        <dbReference type="ChEBI" id="CHEBI:60344"/>
    </ligand>
    <ligandPart>
        <name>Fe</name>
        <dbReference type="ChEBI" id="CHEBI:18248"/>
    </ligandPart>
</feature>
<organism>
    <name type="scientific">Varecia variegata</name>
    <name type="common">Black-and-white ruffed lemur</name>
    <name type="synonym">Lemur variegatus</name>
    <dbReference type="NCBI Taxonomy" id="9455"/>
    <lineage>
        <taxon>Eukaryota</taxon>
        <taxon>Metazoa</taxon>
        <taxon>Chordata</taxon>
        <taxon>Craniata</taxon>
        <taxon>Vertebrata</taxon>
        <taxon>Euteleostomi</taxon>
        <taxon>Mammalia</taxon>
        <taxon>Eutheria</taxon>
        <taxon>Euarchontoglires</taxon>
        <taxon>Primates</taxon>
        <taxon>Strepsirrhini</taxon>
        <taxon>Lemuriformes</taxon>
        <taxon>Lemuridae</taxon>
        <taxon>Varecia</taxon>
    </lineage>
</organism>
<accession>P20019</accession>
<comment type="function">
    <text>Involved in oxygen transport from the lung to the various peripheral tissues.</text>
</comment>
<comment type="subunit">
    <text>Heterotetramer of two alpha chains and two beta chains.</text>
</comment>
<comment type="tissue specificity">
    <text>Red blood cells.</text>
</comment>
<comment type="similarity">
    <text evidence="1">Belongs to the globin family.</text>
</comment>
<evidence type="ECO:0000255" key="1">
    <source>
        <dbReference type="PROSITE-ProRule" id="PRU00238"/>
    </source>
</evidence>
<keyword id="KW-0903">Direct protein sequencing</keyword>
<keyword id="KW-0349">Heme</keyword>
<keyword id="KW-0408">Iron</keyword>
<keyword id="KW-0479">Metal-binding</keyword>
<keyword id="KW-0561">Oxygen transport</keyword>
<keyword id="KW-0813">Transport</keyword>
<reference key="1">
    <citation type="journal article" date="1986" name="Biochim. Biophys. Acta">
        <title>Prosimian hemoglobins. III. The primary structures of the duplicated alpha-globin chains of Lemur variegatus.</title>
        <authorList>
            <person name="Coppenhaver D.H."/>
            <person name="Buettner-Janusch J."/>
            <person name="Ehrhardt M.M."/>
            <person name="Duffy L.K."/>
        </authorList>
    </citation>
    <scope>PROTEIN SEQUENCE</scope>
</reference>
<sequence length="141" mass="15285">VLSPADKNNVKSAWKAIGSHAGEHGAEALERMFLSFPPTKTYFPHFDLSHGSAQIKTHGKKVADALTNAVNHIDDMPGALSALSDLHAHKLRVDPVNFKLLSHCLLVTLASHHPAEFTPAVHASLDKFFAAVSTVLTSKYR</sequence>
<protein>
    <recommendedName>
        <fullName>Hemoglobin subunit alpha-2</fullName>
    </recommendedName>
    <alternativeName>
        <fullName>Alpha-2-globin</fullName>
    </alternativeName>
    <alternativeName>
        <fullName>Hemoglobin alpha-2 chain</fullName>
    </alternativeName>
    <alternativeName>
        <fullName>Hemoglobin alpha-II chain</fullName>
    </alternativeName>
</protein>
<name>HBA2_VARVI</name>